<accession>Q03MJ2</accession>
<feature type="chain" id="PRO_1000009452" description="Leucine--tRNA ligase">
    <location>
        <begin position="1"/>
        <end position="833"/>
    </location>
</feature>
<feature type="short sequence motif" description="'HIGH' region">
    <location>
        <begin position="41"/>
        <end position="52"/>
    </location>
</feature>
<feature type="short sequence motif" description="'KMSKS' region">
    <location>
        <begin position="610"/>
        <end position="614"/>
    </location>
</feature>
<feature type="binding site" evidence="1">
    <location>
        <position position="613"/>
    </location>
    <ligand>
        <name>ATP</name>
        <dbReference type="ChEBI" id="CHEBI:30616"/>
    </ligand>
</feature>
<name>SYL_STRTD</name>
<gene>
    <name evidence="1" type="primary">leuS</name>
    <name type="ordered locus">STER_0268</name>
</gene>
<keyword id="KW-0030">Aminoacyl-tRNA synthetase</keyword>
<keyword id="KW-0067">ATP-binding</keyword>
<keyword id="KW-0963">Cytoplasm</keyword>
<keyword id="KW-0436">Ligase</keyword>
<keyword id="KW-0547">Nucleotide-binding</keyword>
<keyword id="KW-0648">Protein biosynthesis</keyword>
<protein>
    <recommendedName>
        <fullName evidence="1">Leucine--tRNA ligase</fullName>
        <ecNumber evidence="1">6.1.1.4</ecNumber>
    </recommendedName>
    <alternativeName>
        <fullName evidence="1">Leucyl-tRNA synthetase</fullName>
        <shortName evidence="1">LeuRS</shortName>
    </alternativeName>
</protein>
<comment type="catalytic activity">
    <reaction evidence="1">
        <text>tRNA(Leu) + L-leucine + ATP = L-leucyl-tRNA(Leu) + AMP + diphosphate</text>
        <dbReference type="Rhea" id="RHEA:11688"/>
        <dbReference type="Rhea" id="RHEA-COMP:9613"/>
        <dbReference type="Rhea" id="RHEA-COMP:9622"/>
        <dbReference type="ChEBI" id="CHEBI:30616"/>
        <dbReference type="ChEBI" id="CHEBI:33019"/>
        <dbReference type="ChEBI" id="CHEBI:57427"/>
        <dbReference type="ChEBI" id="CHEBI:78442"/>
        <dbReference type="ChEBI" id="CHEBI:78494"/>
        <dbReference type="ChEBI" id="CHEBI:456215"/>
        <dbReference type="EC" id="6.1.1.4"/>
    </reaction>
</comment>
<comment type="subcellular location">
    <subcellularLocation>
        <location evidence="1">Cytoplasm</location>
    </subcellularLocation>
</comment>
<comment type="similarity">
    <text evidence="1">Belongs to the class-I aminoacyl-tRNA synthetase family.</text>
</comment>
<dbReference type="EC" id="6.1.1.4" evidence="1"/>
<dbReference type="EMBL" id="CP000419">
    <property type="protein sequence ID" value="ABJ65580.1"/>
    <property type="molecule type" value="Genomic_DNA"/>
</dbReference>
<dbReference type="RefSeq" id="WP_002947934.1">
    <property type="nucleotide sequence ID" value="NC_008532.1"/>
</dbReference>
<dbReference type="SMR" id="Q03MJ2"/>
<dbReference type="GeneID" id="66898153"/>
<dbReference type="KEGG" id="ste:STER_0268"/>
<dbReference type="HOGENOM" id="CLU_004427_0_0_9"/>
<dbReference type="GO" id="GO:0005829">
    <property type="term" value="C:cytosol"/>
    <property type="evidence" value="ECO:0007669"/>
    <property type="project" value="TreeGrafter"/>
</dbReference>
<dbReference type="GO" id="GO:0002161">
    <property type="term" value="F:aminoacyl-tRNA deacylase activity"/>
    <property type="evidence" value="ECO:0007669"/>
    <property type="project" value="InterPro"/>
</dbReference>
<dbReference type="GO" id="GO:0005524">
    <property type="term" value="F:ATP binding"/>
    <property type="evidence" value="ECO:0007669"/>
    <property type="project" value="UniProtKB-UniRule"/>
</dbReference>
<dbReference type="GO" id="GO:0004823">
    <property type="term" value="F:leucine-tRNA ligase activity"/>
    <property type="evidence" value="ECO:0007669"/>
    <property type="project" value="UniProtKB-UniRule"/>
</dbReference>
<dbReference type="GO" id="GO:0006429">
    <property type="term" value="P:leucyl-tRNA aminoacylation"/>
    <property type="evidence" value="ECO:0007669"/>
    <property type="project" value="UniProtKB-UniRule"/>
</dbReference>
<dbReference type="CDD" id="cd07958">
    <property type="entry name" value="Anticodon_Ia_Leu_BEm"/>
    <property type="match status" value="1"/>
</dbReference>
<dbReference type="CDD" id="cd00812">
    <property type="entry name" value="LeuRS_core"/>
    <property type="match status" value="1"/>
</dbReference>
<dbReference type="FunFam" id="1.10.730.10:FF:000012">
    <property type="entry name" value="Leucine--tRNA ligase"/>
    <property type="match status" value="1"/>
</dbReference>
<dbReference type="FunFam" id="3.40.50.620:FF:000056">
    <property type="entry name" value="Leucine--tRNA ligase"/>
    <property type="match status" value="1"/>
</dbReference>
<dbReference type="FunFam" id="3.40.50.620:FF:000077">
    <property type="entry name" value="Leucine--tRNA ligase"/>
    <property type="match status" value="1"/>
</dbReference>
<dbReference type="FunFam" id="1.10.730.10:FF:000011">
    <property type="entry name" value="Leucine--tRNA ligase chloroplastic/mitochondrial"/>
    <property type="match status" value="1"/>
</dbReference>
<dbReference type="Gene3D" id="3.40.50.620">
    <property type="entry name" value="HUPs"/>
    <property type="match status" value="2"/>
</dbReference>
<dbReference type="Gene3D" id="1.10.730.10">
    <property type="entry name" value="Isoleucyl-tRNA Synthetase, Domain 1"/>
    <property type="match status" value="1"/>
</dbReference>
<dbReference type="Gene3D" id="3.90.740.10">
    <property type="entry name" value="Valyl/Leucyl/Isoleucyl-tRNA synthetase, editing domain"/>
    <property type="match status" value="1"/>
</dbReference>
<dbReference type="HAMAP" id="MF_00049_B">
    <property type="entry name" value="Leu_tRNA_synth_B"/>
    <property type="match status" value="1"/>
</dbReference>
<dbReference type="InterPro" id="IPR001412">
    <property type="entry name" value="aa-tRNA-synth_I_CS"/>
</dbReference>
<dbReference type="InterPro" id="IPR002300">
    <property type="entry name" value="aa-tRNA-synth_Ia"/>
</dbReference>
<dbReference type="InterPro" id="IPR002302">
    <property type="entry name" value="Leu-tRNA-ligase"/>
</dbReference>
<dbReference type="InterPro" id="IPR025709">
    <property type="entry name" value="Leu_tRNA-synth_edit"/>
</dbReference>
<dbReference type="InterPro" id="IPR013155">
    <property type="entry name" value="M/V/L/I-tRNA-synth_anticd-bd"/>
</dbReference>
<dbReference type="InterPro" id="IPR015413">
    <property type="entry name" value="Methionyl/Leucyl_tRNA_Synth"/>
</dbReference>
<dbReference type="InterPro" id="IPR014729">
    <property type="entry name" value="Rossmann-like_a/b/a_fold"/>
</dbReference>
<dbReference type="InterPro" id="IPR009080">
    <property type="entry name" value="tRNAsynth_Ia_anticodon-bd"/>
</dbReference>
<dbReference type="InterPro" id="IPR009008">
    <property type="entry name" value="Val/Leu/Ile-tRNA-synth_edit"/>
</dbReference>
<dbReference type="NCBIfam" id="TIGR00396">
    <property type="entry name" value="leuS_bact"/>
    <property type="match status" value="1"/>
</dbReference>
<dbReference type="PANTHER" id="PTHR43740:SF2">
    <property type="entry name" value="LEUCINE--TRNA LIGASE, MITOCHONDRIAL"/>
    <property type="match status" value="1"/>
</dbReference>
<dbReference type="PANTHER" id="PTHR43740">
    <property type="entry name" value="LEUCYL-TRNA SYNTHETASE"/>
    <property type="match status" value="1"/>
</dbReference>
<dbReference type="Pfam" id="PF08264">
    <property type="entry name" value="Anticodon_1"/>
    <property type="match status" value="1"/>
</dbReference>
<dbReference type="Pfam" id="PF00133">
    <property type="entry name" value="tRNA-synt_1"/>
    <property type="match status" value="2"/>
</dbReference>
<dbReference type="Pfam" id="PF13603">
    <property type="entry name" value="tRNA-synt_1_2"/>
    <property type="match status" value="1"/>
</dbReference>
<dbReference type="Pfam" id="PF09334">
    <property type="entry name" value="tRNA-synt_1g"/>
    <property type="match status" value="1"/>
</dbReference>
<dbReference type="PRINTS" id="PR00985">
    <property type="entry name" value="TRNASYNTHLEU"/>
</dbReference>
<dbReference type="SUPFAM" id="SSF47323">
    <property type="entry name" value="Anticodon-binding domain of a subclass of class I aminoacyl-tRNA synthetases"/>
    <property type="match status" value="1"/>
</dbReference>
<dbReference type="SUPFAM" id="SSF52374">
    <property type="entry name" value="Nucleotidylyl transferase"/>
    <property type="match status" value="1"/>
</dbReference>
<dbReference type="SUPFAM" id="SSF50677">
    <property type="entry name" value="ValRS/IleRS/LeuRS editing domain"/>
    <property type="match status" value="1"/>
</dbReference>
<dbReference type="PROSITE" id="PS00178">
    <property type="entry name" value="AA_TRNA_LIGASE_I"/>
    <property type="match status" value="1"/>
</dbReference>
<reference key="1">
    <citation type="journal article" date="2006" name="Proc. Natl. Acad. Sci. U.S.A.">
        <title>Comparative genomics of the lactic acid bacteria.</title>
        <authorList>
            <person name="Makarova K.S."/>
            <person name="Slesarev A."/>
            <person name="Wolf Y.I."/>
            <person name="Sorokin A."/>
            <person name="Mirkin B."/>
            <person name="Koonin E.V."/>
            <person name="Pavlov A."/>
            <person name="Pavlova N."/>
            <person name="Karamychev V."/>
            <person name="Polouchine N."/>
            <person name="Shakhova V."/>
            <person name="Grigoriev I."/>
            <person name="Lou Y."/>
            <person name="Rohksar D."/>
            <person name="Lucas S."/>
            <person name="Huang K."/>
            <person name="Goodstein D.M."/>
            <person name="Hawkins T."/>
            <person name="Plengvidhya V."/>
            <person name="Welker D."/>
            <person name="Hughes J."/>
            <person name="Goh Y."/>
            <person name="Benson A."/>
            <person name="Baldwin K."/>
            <person name="Lee J.-H."/>
            <person name="Diaz-Muniz I."/>
            <person name="Dosti B."/>
            <person name="Smeianov V."/>
            <person name="Wechter W."/>
            <person name="Barabote R."/>
            <person name="Lorca G."/>
            <person name="Altermann E."/>
            <person name="Barrangou R."/>
            <person name="Ganesan B."/>
            <person name="Xie Y."/>
            <person name="Rawsthorne H."/>
            <person name="Tamir D."/>
            <person name="Parker C."/>
            <person name="Breidt F."/>
            <person name="Broadbent J.R."/>
            <person name="Hutkins R."/>
            <person name="O'Sullivan D."/>
            <person name="Steele J."/>
            <person name="Unlu G."/>
            <person name="Saier M.H. Jr."/>
            <person name="Klaenhammer T."/>
            <person name="Richardson P."/>
            <person name="Kozyavkin S."/>
            <person name="Weimer B.C."/>
            <person name="Mills D.A."/>
        </authorList>
    </citation>
    <scope>NUCLEOTIDE SEQUENCE [LARGE SCALE GENOMIC DNA]</scope>
    <source>
        <strain>ATCC BAA-491 / LMD-9</strain>
    </source>
</reference>
<proteinExistence type="inferred from homology"/>
<organism>
    <name type="scientific">Streptococcus thermophilus (strain ATCC BAA-491 / LMD-9)</name>
    <dbReference type="NCBI Taxonomy" id="322159"/>
    <lineage>
        <taxon>Bacteria</taxon>
        <taxon>Bacillati</taxon>
        <taxon>Bacillota</taxon>
        <taxon>Bacilli</taxon>
        <taxon>Lactobacillales</taxon>
        <taxon>Streptococcaceae</taxon>
        <taxon>Streptococcus</taxon>
    </lineage>
</organism>
<sequence length="833" mass="94422">MSFYNHKEIEPKWQKYWADHHTFKTGTDASKPKFYALDMFPYPSGAGLHVGHPEGYTATDILSRFKRAQGYNVLHPMGWDAFGLPAEQYAMDTGNDPADFTAENIANFKRQINALGFSYDWDREINTTDPNYYKWTQWIFTKLYEKGLAYEAEVPVNWVEELGTAIANEEVLPDGTSERGGYPVVRKPMRQWMLKITAYAERLLNDLDELDWPESIKDMQRNWIGKSTGANVTFKVKGTDKEFTVFTTRPDTLFGATFTVLAPEHDLVDAITSPEQAEAVANYKHQASLKSDLARTDLAKEKTGVWTGAYAINPVNGREIPIWIADYVLASYGTGAVMAVPAHDERDWEFAKQFGLPIVEVLEGGNVEEAAYTEDGPHVNSDFLNGLNKEEAIAKIVAWLEEKGFGQEKITYRLRDWLFSRQRYWGEPIPIIHWEDGTSTAVPESELPLVLPVTKDIRPSGTGESPLANLTDWLEVTREDGVKGRRETNTMPQWAGSSWYYLRYIDPHNTEKLADEDLLKQWLPVDIYVGGAEHAVLHLLYARFWHKFLYDLGVVPTKEPFQKLFNQGMILGTSYRDHRGALVATDKVEKRDGSFFHVETGEELEQAPAKMSKSLKNVVNPDDVVEQYGADTLRVYEMFMGPLDASIAWSEEGLEGSRKFLDRVYRLITSKEIVAENNGGLDKVYNETVKSVTEQIELMKFNTAIAQLMVFVNAANKEDKLYVDYAKGFVQLIAPFAPHLAEELWQTLTATGESISYVAWPTWDESKLVEDEIEIVVQIKGKVRAKLMVAKDLSREELQEVALADEKVKAEIDGKEIVKVIAVPNKLVNIVVK</sequence>
<evidence type="ECO:0000255" key="1">
    <source>
        <dbReference type="HAMAP-Rule" id="MF_00049"/>
    </source>
</evidence>